<protein>
    <recommendedName>
        <fullName evidence="1">PKHD-type hydroxylase PP_0862</fullName>
        <ecNumber evidence="1">1.14.11.-</ecNumber>
    </recommendedName>
</protein>
<keyword id="KW-0223">Dioxygenase</keyword>
<keyword id="KW-0408">Iron</keyword>
<keyword id="KW-0479">Metal-binding</keyword>
<keyword id="KW-0560">Oxidoreductase</keyword>
<keyword id="KW-1185">Reference proteome</keyword>
<keyword id="KW-0847">Vitamin C</keyword>
<evidence type="ECO:0000255" key="1">
    <source>
        <dbReference type="HAMAP-Rule" id="MF_00657"/>
    </source>
</evidence>
<accession>Q88PI8</accession>
<comment type="cofactor">
    <cofactor evidence="1">
        <name>Fe(2+)</name>
        <dbReference type="ChEBI" id="CHEBI:29033"/>
    </cofactor>
    <text evidence="1">Binds 1 Fe(2+) ion per subunit.</text>
</comment>
<comment type="cofactor">
    <cofactor evidence="1">
        <name>L-ascorbate</name>
        <dbReference type="ChEBI" id="CHEBI:38290"/>
    </cofactor>
</comment>
<feature type="chain" id="PRO_0000206681" description="PKHD-type hydroxylase PP_0862">
    <location>
        <begin position="1"/>
        <end position="226"/>
    </location>
</feature>
<feature type="domain" description="Fe2OG dioxygenase" evidence="1">
    <location>
        <begin position="78"/>
        <end position="178"/>
    </location>
</feature>
<feature type="binding site" evidence="1">
    <location>
        <position position="96"/>
    </location>
    <ligand>
        <name>Fe cation</name>
        <dbReference type="ChEBI" id="CHEBI:24875"/>
    </ligand>
</feature>
<feature type="binding site" evidence="1">
    <location>
        <position position="98"/>
    </location>
    <ligand>
        <name>Fe cation</name>
        <dbReference type="ChEBI" id="CHEBI:24875"/>
    </ligand>
</feature>
<feature type="binding site" evidence="1">
    <location>
        <position position="159"/>
    </location>
    <ligand>
        <name>Fe cation</name>
        <dbReference type="ChEBI" id="CHEBI:24875"/>
    </ligand>
</feature>
<feature type="binding site" evidence="1">
    <location>
        <position position="169"/>
    </location>
    <ligand>
        <name>2-oxoglutarate</name>
        <dbReference type="ChEBI" id="CHEBI:16810"/>
    </ligand>
</feature>
<gene>
    <name type="ordered locus">PP_0862</name>
</gene>
<reference key="1">
    <citation type="journal article" date="2002" name="Environ. Microbiol.">
        <title>Complete genome sequence and comparative analysis of the metabolically versatile Pseudomonas putida KT2440.</title>
        <authorList>
            <person name="Nelson K.E."/>
            <person name="Weinel C."/>
            <person name="Paulsen I.T."/>
            <person name="Dodson R.J."/>
            <person name="Hilbert H."/>
            <person name="Martins dos Santos V.A.P."/>
            <person name="Fouts D.E."/>
            <person name="Gill S.R."/>
            <person name="Pop M."/>
            <person name="Holmes M."/>
            <person name="Brinkac L.M."/>
            <person name="Beanan M.J."/>
            <person name="DeBoy R.T."/>
            <person name="Daugherty S.C."/>
            <person name="Kolonay J.F."/>
            <person name="Madupu R."/>
            <person name="Nelson W.C."/>
            <person name="White O."/>
            <person name="Peterson J.D."/>
            <person name="Khouri H.M."/>
            <person name="Hance I."/>
            <person name="Chris Lee P."/>
            <person name="Holtzapple E.K."/>
            <person name="Scanlan D."/>
            <person name="Tran K."/>
            <person name="Moazzez A."/>
            <person name="Utterback T.R."/>
            <person name="Rizzo M."/>
            <person name="Lee K."/>
            <person name="Kosack D."/>
            <person name="Moestl D."/>
            <person name="Wedler H."/>
            <person name="Lauber J."/>
            <person name="Stjepandic D."/>
            <person name="Hoheisel J."/>
            <person name="Straetz M."/>
            <person name="Heim S."/>
            <person name="Kiewitz C."/>
            <person name="Eisen J.A."/>
            <person name="Timmis K.N."/>
            <person name="Duesterhoeft A."/>
            <person name="Tuemmler B."/>
            <person name="Fraser C.M."/>
        </authorList>
    </citation>
    <scope>NUCLEOTIDE SEQUENCE [LARGE SCALE GENOMIC DNA]</scope>
    <source>
        <strain>ATCC 47054 / DSM 6125 / CFBP 8728 / NCIMB 11950 / KT2440</strain>
    </source>
</reference>
<name>Y862_PSEPK</name>
<proteinExistence type="inferred from homology"/>
<sequence length="226" mass="25336">MLLHIPGLFDADELARIREALERADWADGKVTAGYQSAKAKHNLQLPEGHALAKEIGTALIDRLWKTPRFMSAALPHKVFPPLINCYRDGGNFGFHIDNALRQPKGSPERVRTDLSSTLFLSDPESYDGGELVIQDTYGVQQIKLAAGDMVLYPGTSLHKVNPVTRGQRYAAFFWTQSLVRDDSQRALLFEMDNAIQQLTADVPDHPSLLQLTGTYHNLLRRWAEV</sequence>
<organism>
    <name type="scientific">Pseudomonas putida (strain ATCC 47054 / DSM 6125 / CFBP 8728 / NCIMB 11950 / KT2440)</name>
    <dbReference type="NCBI Taxonomy" id="160488"/>
    <lineage>
        <taxon>Bacteria</taxon>
        <taxon>Pseudomonadati</taxon>
        <taxon>Pseudomonadota</taxon>
        <taxon>Gammaproteobacteria</taxon>
        <taxon>Pseudomonadales</taxon>
        <taxon>Pseudomonadaceae</taxon>
        <taxon>Pseudomonas</taxon>
    </lineage>
</organism>
<dbReference type="EC" id="1.14.11.-" evidence="1"/>
<dbReference type="EMBL" id="AE015451">
    <property type="protein sequence ID" value="AAN66487.1"/>
    <property type="molecule type" value="Genomic_DNA"/>
</dbReference>
<dbReference type="RefSeq" id="NP_743023.1">
    <property type="nucleotide sequence ID" value="NC_002947.4"/>
</dbReference>
<dbReference type="RefSeq" id="WP_003248502.1">
    <property type="nucleotide sequence ID" value="NZ_CP169744.1"/>
</dbReference>
<dbReference type="SMR" id="Q88PI8"/>
<dbReference type="STRING" id="160488.PP_0862"/>
<dbReference type="PaxDb" id="160488-PP_0862"/>
<dbReference type="DNASU" id="1044734"/>
<dbReference type="KEGG" id="ppu:PP_0862"/>
<dbReference type="PATRIC" id="fig|160488.4.peg.923"/>
<dbReference type="eggNOG" id="COG3128">
    <property type="taxonomic scope" value="Bacteria"/>
</dbReference>
<dbReference type="HOGENOM" id="CLU_106663_0_0_6"/>
<dbReference type="OrthoDB" id="9812472at2"/>
<dbReference type="PhylomeDB" id="Q88PI8"/>
<dbReference type="BioCyc" id="PPUT160488:G1G01-937-MONOMER"/>
<dbReference type="Proteomes" id="UP000000556">
    <property type="component" value="Chromosome"/>
</dbReference>
<dbReference type="GO" id="GO:0016706">
    <property type="term" value="F:2-oxoglutarate-dependent dioxygenase activity"/>
    <property type="evidence" value="ECO:0007669"/>
    <property type="project" value="UniProtKB-UniRule"/>
</dbReference>
<dbReference type="GO" id="GO:0005506">
    <property type="term" value="F:iron ion binding"/>
    <property type="evidence" value="ECO:0007669"/>
    <property type="project" value="UniProtKB-UniRule"/>
</dbReference>
<dbReference type="GO" id="GO:0031418">
    <property type="term" value="F:L-ascorbic acid binding"/>
    <property type="evidence" value="ECO:0007669"/>
    <property type="project" value="UniProtKB-KW"/>
</dbReference>
<dbReference type="GO" id="GO:0006974">
    <property type="term" value="P:DNA damage response"/>
    <property type="evidence" value="ECO:0007669"/>
    <property type="project" value="TreeGrafter"/>
</dbReference>
<dbReference type="GO" id="GO:0006879">
    <property type="term" value="P:intracellular iron ion homeostasis"/>
    <property type="evidence" value="ECO:0007669"/>
    <property type="project" value="TreeGrafter"/>
</dbReference>
<dbReference type="Gene3D" id="2.60.120.620">
    <property type="entry name" value="q2cbj1_9rhob like domain"/>
    <property type="match status" value="1"/>
</dbReference>
<dbReference type="Gene3D" id="4.10.860.20">
    <property type="entry name" value="Rabenosyn, Rab binding domain"/>
    <property type="match status" value="1"/>
</dbReference>
<dbReference type="HAMAP" id="MF_00657">
    <property type="entry name" value="Hydroxyl_YbiX"/>
    <property type="match status" value="1"/>
</dbReference>
<dbReference type="InterPro" id="IPR005123">
    <property type="entry name" value="Oxoglu/Fe-dep_dioxygenase_dom"/>
</dbReference>
<dbReference type="InterPro" id="IPR041097">
    <property type="entry name" value="PKHD_C"/>
</dbReference>
<dbReference type="InterPro" id="IPR023550">
    <property type="entry name" value="PKHD_hydroxylase"/>
</dbReference>
<dbReference type="InterPro" id="IPR006620">
    <property type="entry name" value="Pro_4_hyd_alph"/>
</dbReference>
<dbReference type="InterPro" id="IPR044862">
    <property type="entry name" value="Pro_4_hyd_alph_FE2OG_OXY"/>
</dbReference>
<dbReference type="NCBIfam" id="NF003974">
    <property type="entry name" value="PRK05467.1-3"/>
    <property type="match status" value="1"/>
</dbReference>
<dbReference type="NCBIfam" id="NF003975">
    <property type="entry name" value="PRK05467.1-4"/>
    <property type="match status" value="1"/>
</dbReference>
<dbReference type="PANTHER" id="PTHR41536">
    <property type="entry name" value="PKHD-TYPE HYDROXYLASE YBIX"/>
    <property type="match status" value="1"/>
</dbReference>
<dbReference type="PANTHER" id="PTHR41536:SF1">
    <property type="entry name" value="PKHD-TYPE HYDROXYLASE YBIX"/>
    <property type="match status" value="1"/>
</dbReference>
<dbReference type="Pfam" id="PF13640">
    <property type="entry name" value="2OG-FeII_Oxy_3"/>
    <property type="match status" value="1"/>
</dbReference>
<dbReference type="Pfam" id="PF18331">
    <property type="entry name" value="PKHD_C"/>
    <property type="match status" value="1"/>
</dbReference>
<dbReference type="SMART" id="SM00702">
    <property type="entry name" value="P4Hc"/>
    <property type="match status" value="1"/>
</dbReference>
<dbReference type="SUPFAM" id="SSF51197">
    <property type="entry name" value="Clavaminate synthase-like"/>
    <property type="match status" value="1"/>
</dbReference>
<dbReference type="PROSITE" id="PS51471">
    <property type="entry name" value="FE2OG_OXY"/>
    <property type="match status" value="1"/>
</dbReference>